<feature type="chain" id="PRO_0000174492" description="S-adenosylmethionine synthase">
    <location>
        <begin position="1"/>
        <end position="400"/>
    </location>
</feature>
<feature type="region of interest" description="Flexible loop" evidence="1">
    <location>
        <begin position="101"/>
        <end position="111"/>
    </location>
</feature>
<feature type="binding site" description="in other chain" evidence="1">
    <location>
        <position position="17"/>
    </location>
    <ligand>
        <name>ATP</name>
        <dbReference type="ChEBI" id="CHEBI:30616"/>
        <note>ligand shared between two neighboring subunits</note>
    </ligand>
</feature>
<feature type="binding site" evidence="1">
    <location>
        <position position="19"/>
    </location>
    <ligand>
        <name>Mg(2+)</name>
        <dbReference type="ChEBI" id="CHEBI:18420"/>
    </ligand>
</feature>
<feature type="binding site" evidence="1">
    <location>
        <position position="45"/>
    </location>
    <ligand>
        <name>K(+)</name>
        <dbReference type="ChEBI" id="CHEBI:29103"/>
    </ligand>
</feature>
<feature type="binding site" description="in other chain" evidence="1">
    <location>
        <position position="58"/>
    </location>
    <ligand>
        <name>L-methionine</name>
        <dbReference type="ChEBI" id="CHEBI:57844"/>
        <note>ligand shared between two neighboring subunits</note>
    </ligand>
</feature>
<feature type="binding site" description="in other chain" evidence="1">
    <location>
        <position position="101"/>
    </location>
    <ligand>
        <name>L-methionine</name>
        <dbReference type="ChEBI" id="CHEBI:57844"/>
        <note>ligand shared between two neighboring subunits</note>
    </ligand>
</feature>
<feature type="binding site" description="in other chain" evidence="1">
    <location>
        <begin position="177"/>
        <end position="179"/>
    </location>
    <ligand>
        <name>ATP</name>
        <dbReference type="ChEBI" id="CHEBI:30616"/>
        <note>ligand shared between two neighboring subunits</note>
    </ligand>
</feature>
<feature type="binding site" description="in other chain" evidence="1">
    <location>
        <begin position="244"/>
        <end position="245"/>
    </location>
    <ligand>
        <name>ATP</name>
        <dbReference type="ChEBI" id="CHEBI:30616"/>
        <note>ligand shared between two neighboring subunits</note>
    </ligand>
</feature>
<feature type="binding site" evidence="1">
    <location>
        <position position="253"/>
    </location>
    <ligand>
        <name>ATP</name>
        <dbReference type="ChEBI" id="CHEBI:30616"/>
        <note>ligand shared between two neighboring subunits</note>
    </ligand>
</feature>
<feature type="binding site" evidence="1">
    <location>
        <position position="253"/>
    </location>
    <ligand>
        <name>L-methionine</name>
        <dbReference type="ChEBI" id="CHEBI:57844"/>
        <note>ligand shared between two neighboring subunits</note>
    </ligand>
</feature>
<feature type="binding site" description="in other chain" evidence="1">
    <location>
        <begin position="259"/>
        <end position="260"/>
    </location>
    <ligand>
        <name>ATP</name>
        <dbReference type="ChEBI" id="CHEBI:30616"/>
        <note>ligand shared between two neighboring subunits</note>
    </ligand>
</feature>
<feature type="binding site" evidence="1">
    <location>
        <position position="276"/>
    </location>
    <ligand>
        <name>ATP</name>
        <dbReference type="ChEBI" id="CHEBI:30616"/>
        <note>ligand shared between two neighboring subunits</note>
    </ligand>
</feature>
<feature type="binding site" evidence="1">
    <location>
        <position position="280"/>
    </location>
    <ligand>
        <name>ATP</name>
        <dbReference type="ChEBI" id="CHEBI:30616"/>
        <note>ligand shared between two neighboring subunits</note>
    </ligand>
</feature>
<feature type="binding site" description="in other chain" evidence="1">
    <location>
        <position position="284"/>
    </location>
    <ligand>
        <name>L-methionine</name>
        <dbReference type="ChEBI" id="CHEBI:57844"/>
        <note>ligand shared between two neighboring subunits</note>
    </ligand>
</feature>
<feature type="sequence conflict" description="In Ref. 1; AAB17066." evidence="2" ref="1">
    <original>S</original>
    <variation>Y</variation>
    <location>
        <position position="26"/>
    </location>
</feature>
<feature type="sequence conflict" description="In Ref. 1; AAB17066." evidence="2" ref="1">
    <original>Q</original>
    <variation>P</variation>
    <location>
        <position position="111"/>
    </location>
</feature>
<feature type="sequence conflict" description="In Ref. 1; AAB17066." evidence="2" ref="1">
    <original>A</original>
    <variation>V</variation>
    <location>
        <position position="140"/>
    </location>
</feature>
<dbReference type="EC" id="2.5.1.6" evidence="1"/>
<dbReference type="EMBL" id="U52812">
    <property type="protein sequence ID" value="AAB17066.1"/>
    <property type="molecule type" value="Genomic_DNA"/>
</dbReference>
<dbReference type="EMBL" id="AF008220">
    <property type="protein sequence ID" value="AAC00242.1"/>
    <property type="molecule type" value="Genomic_DNA"/>
</dbReference>
<dbReference type="EMBL" id="AL009126">
    <property type="protein sequence ID" value="CAB15033.1"/>
    <property type="molecule type" value="Genomic_DNA"/>
</dbReference>
<dbReference type="PIR" id="D69657">
    <property type="entry name" value="D69657"/>
</dbReference>
<dbReference type="RefSeq" id="NP_390933.1">
    <property type="nucleotide sequence ID" value="NC_000964.3"/>
</dbReference>
<dbReference type="RefSeq" id="WP_003229102.1">
    <property type="nucleotide sequence ID" value="NZ_OZ025638.1"/>
</dbReference>
<dbReference type="SMR" id="P54419"/>
<dbReference type="FunCoup" id="P54419">
    <property type="interactions" value="750"/>
</dbReference>
<dbReference type="IntAct" id="P54419">
    <property type="interactions" value="1"/>
</dbReference>
<dbReference type="MINT" id="P54419"/>
<dbReference type="STRING" id="224308.BSU30550"/>
<dbReference type="jPOST" id="P54419"/>
<dbReference type="PaxDb" id="224308-BSU30550"/>
<dbReference type="EnsemblBacteria" id="CAB15033">
    <property type="protein sequence ID" value="CAB15033"/>
    <property type="gene ID" value="BSU_30550"/>
</dbReference>
<dbReference type="GeneID" id="76987877"/>
<dbReference type="GeneID" id="937090"/>
<dbReference type="KEGG" id="bsu:BSU30550"/>
<dbReference type="PATRIC" id="fig|224308.179.peg.3313"/>
<dbReference type="eggNOG" id="COG0192">
    <property type="taxonomic scope" value="Bacteria"/>
</dbReference>
<dbReference type="InParanoid" id="P54419"/>
<dbReference type="OrthoDB" id="9801686at2"/>
<dbReference type="PhylomeDB" id="P54419"/>
<dbReference type="BioCyc" id="BSUB:BSU30550-MONOMER"/>
<dbReference type="BioCyc" id="MetaCyc:MONOMER-14558"/>
<dbReference type="BRENDA" id="2.5.1.6">
    <property type="organism ID" value="658"/>
</dbReference>
<dbReference type="SABIO-RK" id="P54419"/>
<dbReference type="UniPathway" id="UPA00315">
    <property type="reaction ID" value="UER00080"/>
</dbReference>
<dbReference type="PRO" id="PR:P54419"/>
<dbReference type="Proteomes" id="UP000001570">
    <property type="component" value="Chromosome"/>
</dbReference>
<dbReference type="GO" id="GO:0005829">
    <property type="term" value="C:cytosol"/>
    <property type="evidence" value="ECO:0000318"/>
    <property type="project" value="GO_Central"/>
</dbReference>
<dbReference type="GO" id="GO:0005524">
    <property type="term" value="F:ATP binding"/>
    <property type="evidence" value="ECO:0007669"/>
    <property type="project" value="UniProtKB-UniRule"/>
</dbReference>
<dbReference type="GO" id="GO:0000287">
    <property type="term" value="F:magnesium ion binding"/>
    <property type="evidence" value="ECO:0007669"/>
    <property type="project" value="UniProtKB-UniRule"/>
</dbReference>
<dbReference type="GO" id="GO:0004478">
    <property type="term" value="F:methionine adenosyltransferase activity"/>
    <property type="evidence" value="ECO:0000318"/>
    <property type="project" value="GO_Central"/>
</dbReference>
<dbReference type="GO" id="GO:0006730">
    <property type="term" value="P:one-carbon metabolic process"/>
    <property type="evidence" value="ECO:0007669"/>
    <property type="project" value="UniProtKB-KW"/>
</dbReference>
<dbReference type="GO" id="GO:0006556">
    <property type="term" value="P:S-adenosylmethionine biosynthetic process"/>
    <property type="evidence" value="ECO:0000318"/>
    <property type="project" value="GO_Central"/>
</dbReference>
<dbReference type="CDD" id="cd18079">
    <property type="entry name" value="S-AdoMet_synt"/>
    <property type="match status" value="1"/>
</dbReference>
<dbReference type="FunFam" id="3.30.300.10:FF:000003">
    <property type="entry name" value="S-adenosylmethionine synthase"/>
    <property type="match status" value="1"/>
</dbReference>
<dbReference type="FunFam" id="3.30.300.10:FF:000004">
    <property type="entry name" value="S-adenosylmethionine synthase"/>
    <property type="match status" value="1"/>
</dbReference>
<dbReference type="Gene3D" id="3.30.300.10">
    <property type="match status" value="3"/>
</dbReference>
<dbReference type="HAMAP" id="MF_00086">
    <property type="entry name" value="S_AdoMet_synth1"/>
    <property type="match status" value="1"/>
</dbReference>
<dbReference type="InterPro" id="IPR022631">
    <property type="entry name" value="ADOMET_SYNTHASE_CS"/>
</dbReference>
<dbReference type="InterPro" id="IPR022630">
    <property type="entry name" value="S-AdoMet_synt_C"/>
</dbReference>
<dbReference type="InterPro" id="IPR022629">
    <property type="entry name" value="S-AdoMet_synt_central"/>
</dbReference>
<dbReference type="InterPro" id="IPR022628">
    <property type="entry name" value="S-AdoMet_synt_N"/>
</dbReference>
<dbReference type="InterPro" id="IPR002133">
    <property type="entry name" value="S-AdoMet_synthetase"/>
</dbReference>
<dbReference type="InterPro" id="IPR022636">
    <property type="entry name" value="S-AdoMet_synthetase_sfam"/>
</dbReference>
<dbReference type="NCBIfam" id="TIGR01034">
    <property type="entry name" value="metK"/>
    <property type="match status" value="1"/>
</dbReference>
<dbReference type="PANTHER" id="PTHR11964">
    <property type="entry name" value="S-ADENOSYLMETHIONINE SYNTHETASE"/>
    <property type="match status" value="1"/>
</dbReference>
<dbReference type="Pfam" id="PF02773">
    <property type="entry name" value="S-AdoMet_synt_C"/>
    <property type="match status" value="1"/>
</dbReference>
<dbReference type="Pfam" id="PF02772">
    <property type="entry name" value="S-AdoMet_synt_M"/>
    <property type="match status" value="1"/>
</dbReference>
<dbReference type="Pfam" id="PF00438">
    <property type="entry name" value="S-AdoMet_synt_N"/>
    <property type="match status" value="1"/>
</dbReference>
<dbReference type="PIRSF" id="PIRSF000497">
    <property type="entry name" value="MAT"/>
    <property type="match status" value="1"/>
</dbReference>
<dbReference type="SUPFAM" id="SSF55973">
    <property type="entry name" value="S-adenosylmethionine synthetase"/>
    <property type="match status" value="3"/>
</dbReference>
<dbReference type="PROSITE" id="PS00376">
    <property type="entry name" value="ADOMET_SYNTHASE_1"/>
    <property type="match status" value="1"/>
</dbReference>
<dbReference type="PROSITE" id="PS00377">
    <property type="entry name" value="ADOMET_SYNTHASE_2"/>
    <property type="match status" value="1"/>
</dbReference>
<proteinExistence type="inferred from homology"/>
<evidence type="ECO:0000255" key="1">
    <source>
        <dbReference type="HAMAP-Rule" id="MF_00086"/>
    </source>
</evidence>
<evidence type="ECO:0000305" key="2"/>
<reference key="1">
    <citation type="journal article" date="1996" name="J. Bacteriol.">
        <title>Cloning and characterization of the metE gene encoding S-adenosylmethionine synthetase from Bacillus subtilis.</title>
        <authorList>
            <person name="Yocum R."/>
            <person name="Perkins J.B."/>
            <person name="Howitt C.L."/>
            <person name="Pero J."/>
        </authorList>
    </citation>
    <scope>NUCLEOTIDE SEQUENCE [GENOMIC DNA]</scope>
    <source>
        <strain>168 / PY79</strain>
    </source>
</reference>
<reference key="2">
    <citation type="journal article" date="1997" name="Microbiology">
        <title>Sequencing and functional annotation of the Bacillus subtilis genes in the 200 kb rrnB-dnaB region.</title>
        <authorList>
            <person name="Lapidus A."/>
            <person name="Galleron N."/>
            <person name="Sorokin A."/>
            <person name="Ehrlich S.D."/>
        </authorList>
    </citation>
    <scope>NUCLEOTIDE SEQUENCE [GENOMIC DNA]</scope>
    <source>
        <strain>168</strain>
    </source>
</reference>
<reference key="3">
    <citation type="journal article" date="1997" name="Nature">
        <title>The complete genome sequence of the Gram-positive bacterium Bacillus subtilis.</title>
        <authorList>
            <person name="Kunst F."/>
            <person name="Ogasawara N."/>
            <person name="Moszer I."/>
            <person name="Albertini A.M."/>
            <person name="Alloni G."/>
            <person name="Azevedo V."/>
            <person name="Bertero M.G."/>
            <person name="Bessieres P."/>
            <person name="Bolotin A."/>
            <person name="Borchert S."/>
            <person name="Borriss R."/>
            <person name="Boursier L."/>
            <person name="Brans A."/>
            <person name="Braun M."/>
            <person name="Brignell S.C."/>
            <person name="Bron S."/>
            <person name="Brouillet S."/>
            <person name="Bruschi C.V."/>
            <person name="Caldwell B."/>
            <person name="Capuano V."/>
            <person name="Carter N.M."/>
            <person name="Choi S.-K."/>
            <person name="Codani J.-J."/>
            <person name="Connerton I.F."/>
            <person name="Cummings N.J."/>
            <person name="Daniel R.A."/>
            <person name="Denizot F."/>
            <person name="Devine K.M."/>
            <person name="Duesterhoeft A."/>
            <person name="Ehrlich S.D."/>
            <person name="Emmerson P.T."/>
            <person name="Entian K.-D."/>
            <person name="Errington J."/>
            <person name="Fabret C."/>
            <person name="Ferrari E."/>
            <person name="Foulger D."/>
            <person name="Fritz C."/>
            <person name="Fujita M."/>
            <person name="Fujita Y."/>
            <person name="Fuma S."/>
            <person name="Galizzi A."/>
            <person name="Galleron N."/>
            <person name="Ghim S.-Y."/>
            <person name="Glaser P."/>
            <person name="Goffeau A."/>
            <person name="Golightly E.J."/>
            <person name="Grandi G."/>
            <person name="Guiseppi G."/>
            <person name="Guy B.J."/>
            <person name="Haga K."/>
            <person name="Haiech J."/>
            <person name="Harwood C.R."/>
            <person name="Henaut A."/>
            <person name="Hilbert H."/>
            <person name="Holsappel S."/>
            <person name="Hosono S."/>
            <person name="Hullo M.-F."/>
            <person name="Itaya M."/>
            <person name="Jones L.-M."/>
            <person name="Joris B."/>
            <person name="Karamata D."/>
            <person name="Kasahara Y."/>
            <person name="Klaerr-Blanchard M."/>
            <person name="Klein C."/>
            <person name="Kobayashi Y."/>
            <person name="Koetter P."/>
            <person name="Koningstein G."/>
            <person name="Krogh S."/>
            <person name="Kumano M."/>
            <person name="Kurita K."/>
            <person name="Lapidus A."/>
            <person name="Lardinois S."/>
            <person name="Lauber J."/>
            <person name="Lazarevic V."/>
            <person name="Lee S.-M."/>
            <person name="Levine A."/>
            <person name="Liu H."/>
            <person name="Masuda S."/>
            <person name="Mauel C."/>
            <person name="Medigue C."/>
            <person name="Medina N."/>
            <person name="Mellado R.P."/>
            <person name="Mizuno M."/>
            <person name="Moestl D."/>
            <person name="Nakai S."/>
            <person name="Noback M."/>
            <person name="Noone D."/>
            <person name="O'Reilly M."/>
            <person name="Ogawa K."/>
            <person name="Ogiwara A."/>
            <person name="Oudega B."/>
            <person name="Park S.-H."/>
            <person name="Parro V."/>
            <person name="Pohl T.M."/>
            <person name="Portetelle D."/>
            <person name="Porwollik S."/>
            <person name="Prescott A.M."/>
            <person name="Presecan E."/>
            <person name="Pujic P."/>
            <person name="Purnelle B."/>
            <person name="Rapoport G."/>
            <person name="Rey M."/>
            <person name="Reynolds S."/>
            <person name="Rieger M."/>
            <person name="Rivolta C."/>
            <person name="Rocha E."/>
            <person name="Roche B."/>
            <person name="Rose M."/>
            <person name="Sadaie Y."/>
            <person name="Sato T."/>
            <person name="Scanlan E."/>
            <person name="Schleich S."/>
            <person name="Schroeter R."/>
            <person name="Scoffone F."/>
            <person name="Sekiguchi J."/>
            <person name="Sekowska A."/>
            <person name="Seror S.J."/>
            <person name="Serror P."/>
            <person name="Shin B.-S."/>
            <person name="Soldo B."/>
            <person name="Sorokin A."/>
            <person name="Tacconi E."/>
            <person name="Takagi T."/>
            <person name="Takahashi H."/>
            <person name="Takemaru K."/>
            <person name="Takeuchi M."/>
            <person name="Tamakoshi A."/>
            <person name="Tanaka T."/>
            <person name="Terpstra P."/>
            <person name="Tognoni A."/>
            <person name="Tosato V."/>
            <person name="Uchiyama S."/>
            <person name="Vandenbol M."/>
            <person name="Vannier F."/>
            <person name="Vassarotti A."/>
            <person name="Viari A."/>
            <person name="Wambutt R."/>
            <person name="Wedler E."/>
            <person name="Wedler H."/>
            <person name="Weitzenegger T."/>
            <person name="Winters P."/>
            <person name="Wipat A."/>
            <person name="Yamamoto H."/>
            <person name="Yamane K."/>
            <person name="Yasumoto K."/>
            <person name="Yata K."/>
            <person name="Yoshida K."/>
            <person name="Yoshikawa H.-F."/>
            <person name="Zumstein E."/>
            <person name="Yoshikawa H."/>
            <person name="Danchin A."/>
        </authorList>
    </citation>
    <scope>NUCLEOTIDE SEQUENCE [LARGE SCALE GENOMIC DNA]</scope>
    <source>
        <strain>168</strain>
    </source>
</reference>
<sequence>MSKNRRLFTSESVTEGHPDKICDQISDSILDEILKKDPNARVACETSVTTGLVLVSGEITTSTYVDIPKTVRQTIKEIGYTRAKYGFDAETCAVLTSIDEQSADIAMGVDQALEAREGTMSDEEIEAIGAGDQGLMFGYACNETKELMPLPISLAHKLARRLSEVRKEDILPYLRPDGKTQVTVEYDENNKPVRIDAIVISTQHHPEITLEQIQRNIKEHVINPVVPEELIDEETKYFINPTGRFVIGGPQGDAGLTGRKIIVDTYGGYARHGGGAFSGKDATKVDRSAAYAARYVAKNIVAAELADSCEVQLAYAIGVAQPVSISINTFGSGKASEEKLIEVVRNNFDLRPAGIIKMLDLRRPIYKQTAAYGHFGRHDVDLPWERTDKAEQLRKEALGE</sequence>
<comment type="function">
    <text evidence="1">Catalyzes the formation of S-adenosylmethionine (AdoMet) from methionine and ATP. The overall synthetic reaction is composed of two sequential steps, AdoMet formation and the subsequent tripolyphosphate hydrolysis which occurs prior to release of AdoMet from the enzyme.</text>
</comment>
<comment type="catalytic activity">
    <reaction evidence="1">
        <text>L-methionine + ATP + H2O = S-adenosyl-L-methionine + phosphate + diphosphate</text>
        <dbReference type="Rhea" id="RHEA:21080"/>
        <dbReference type="ChEBI" id="CHEBI:15377"/>
        <dbReference type="ChEBI" id="CHEBI:30616"/>
        <dbReference type="ChEBI" id="CHEBI:33019"/>
        <dbReference type="ChEBI" id="CHEBI:43474"/>
        <dbReference type="ChEBI" id="CHEBI:57844"/>
        <dbReference type="ChEBI" id="CHEBI:59789"/>
        <dbReference type="EC" id="2.5.1.6"/>
    </reaction>
</comment>
<comment type="cofactor">
    <cofactor evidence="1">
        <name>Mg(2+)</name>
        <dbReference type="ChEBI" id="CHEBI:18420"/>
    </cofactor>
    <text evidence="1">Binds 2 divalent ions per subunit.</text>
</comment>
<comment type="cofactor">
    <cofactor evidence="1">
        <name>K(+)</name>
        <dbReference type="ChEBI" id="CHEBI:29103"/>
    </cofactor>
    <text evidence="1">Binds 1 potassium ion per subunit.</text>
</comment>
<comment type="pathway">
    <text evidence="1">Amino-acid biosynthesis; S-adenosyl-L-methionine biosynthesis; S-adenosyl-L-methionine from L-methionine: step 1/1.</text>
</comment>
<comment type="subunit">
    <text evidence="1">Homotetramer; dimer of dimers.</text>
</comment>
<comment type="subcellular location">
    <subcellularLocation>
        <location evidence="1">Cytoplasm</location>
    </subcellularLocation>
</comment>
<comment type="similarity">
    <text evidence="1">Belongs to the AdoMet synthase family.</text>
</comment>
<gene>
    <name evidence="1" type="primary">metK</name>
    <name type="synonym">metE</name>
    <name type="ordered locus">BSU30550</name>
</gene>
<accession>P54419</accession>
<accession>O34566</accession>
<name>METK_BACSU</name>
<organism>
    <name type="scientific">Bacillus subtilis (strain 168)</name>
    <dbReference type="NCBI Taxonomy" id="224308"/>
    <lineage>
        <taxon>Bacteria</taxon>
        <taxon>Bacillati</taxon>
        <taxon>Bacillota</taxon>
        <taxon>Bacilli</taxon>
        <taxon>Bacillales</taxon>
        <taxon>Bacillaceae</taxon>
        <taxon>Bacillus</taxon>
    </lineage>
</organism>
<keyword id="KW-0067">ATP-binding</keyword>
<keyword id="KW-0963">Cytoplasm</keyword>
<keyword id="KW-0460">Magnesium</keyword>
<keyword id="KW-0479">Metal-binding</keyword>
<keyword id="KW-0547">Nucleotide-binding</keyword>
<keyword id="KW-0554">One-carbon metabolism</keyword>
<keyword id="KW-0630">Potassium</keyword>
<keyword id="KW-1185">Reference proteome</keyword>
<keyword id="KW-0808">Transferase</keyword>
<protein>
    <recommendedName>
        <fullName evidence="1">S-adenosylmethionine synthase</fullName>
        <shortName evidence="1">AdoMet synthase</shortName>
        <ecNumber evidence="1">2.5.1.6</ecNumber>
    </recommendedName>
    <alternativeName>
        <fullName evidence="1">MAT</fullName>
    </alternativeName>
    <alternativeName>
        <fullName evidence="1">Methionine adenosyltransferase</fullName>
    </alternativeName>
</protein>